<feature type="chain" id="PRO_0000317855" description="Autophagy protein 5">
    <location>
        <begin position="1"/>
        <end position="286"/>
    </location>
</feature>
<feature type="cross-link" description="Glycyl lysine isopeptide (Lys-Gly) (interchain with G-Cter in ATG12)" evidence="1">
    <location>
        <position position="160"/>
    </location>
</feature>
<evidence type="ECO:0000250" key="1"/>
<evidence type="ECO:0000305" key="2"/>
<reference key="1">
    <citation type="journal article" date="2009" name="Nature">
        <title>Evolution of pathogenicity and sexual reproduction in eight Candida genomes.</title>
        <authorList>
            <person name="Butler G."/>
            <person name="Rasmussen M.D."/>
            <person name="Lin M.F."/>
            <person name="Santos M.A.S."/>
            <person name="Sakthikumar S."/>
            <person name="Munro C.A."/>
            <person name="Rheinbay E."/>
            <person name="Grabherr M."/>
            <person name="Forche A."/>
            <person name="Reedy J.L."/>
            <person name="Agrafioti I."/>
            <person name="Arnaud M.B."/>
            <person name="Bates S."/>
            <person name="Brown A.J.P."/>
            <person name="Brunke S."/>
            <person name="Costanzo M.C."/>
            <person name="Fitzpatrick D.A."/>
            <person name="de Groot P.W.J."/>
            <person name="Harris D."/>
            <person name="Hoyer L.L."/>
            <person name="Hube B."/>
            <person name="Klis F.M."/>
            <person name="Kodira C."/>
            <person name="Lennard N."/>
            <person name="Logue M.E."/>
            <person name="Martin R."/>
            <person name="Neiman A.M."/>
            <person name="Nikolaou E."/>
            <person name="Quail M.A."/>
            <person name="Quinn J."/>
            <person name="Santos M.C."/>
            <person name="Schmitzberger F.F."/>
            <person name="Sherlock G."/>
            <person name="Shah P."/>
            <person name="Silverstein K.A.T."/>
            <person name="Skrzypek M.S."/>
            <person name="Soll D."/>
            <person name="Staggs R."/>
            <person name="Stansfield I."/>
            <person name="Stumpf M.P.H."/>
            <person name="Sudbery P.E."/>
            <person name="Srikantha T."/>
            <person name="Zeng Q."/>
            <person name="Berman J."/>
            <person name="Berriman M."/>
            <person name="Heitman J."/>
            <person name="Gow N.A.R."/>
            <person name="Lorenz M.C."/>
            <person name="Birren B.W."/>
            <person name="Kellis M."/>
            <person name="Cuomo C.A."/>
        </authorList>
    </citation>
    <scope>NUCLEOTIDE SEQUENCE [LARGE SCALE GENOMIC DNA]</scope>
    <source>
        <strain>ATCC 11503 / BCRC 21390 / CBS 2605 / JCM 1781 / NBRC 1676 / NRRL YB-4239</strain>
    </source>
</reference>
<gene>
    <name type="primary">ATG5</name>
    <name type="ORF">LELG_01643</name>
</gene>
<organism>
    <name type="scientific">Lodderomyces elongisporus (strain ATCC 11503 / CBS 2605 / JCM 1781 / NBRC 1676 / NRRL YB-4239)</name>
    <name type="common">Yeast</name>
    <name type="synonym">Saccharomyces elongisporus</name>
    <dbReference type="NCBI Taxonomy" id="379508"/>
    <lineage>
        <taxon>Eukaryota</taxon>
        <taxon>Fungi</taxon>
        <taxon>Dikarya</taxon>
        <taxon>Ascomycota</taxon>
        <taxon>Saccharomycotina</taxon>
        <taxon>Pichiomycetes</taxon>
        <taxon>Debaryomycetaceae</taxon>
        <taxon>Candida/Lodderomyces clade</taxon>
        <taxon>Lodderomyces</taxon>
    </lineage>
</organism>
<dbReference type="EMBL" id="CH981525">
    <property type="protein sequence ID" value="EDK43465.1"/>
    <property type="molecule type" value="Genomic_DNA"/>
</dbReference>
<dbReference type="RefSeq" id="XP_001526815.1">
    <property type="nucleotide sequence ID" value="XM_001526765.1"/>
</dbReference>
<dbReference type="SMR" id="A5DWA7"/>
<dbReference type="FunCoup" id="A5DWA7">
    <property type="interactions" value="324"/>
</dbReference>
<dbReference type="STRING" id="379508.A5DWA7"/>
<dbReference type="GeneID" id="5234272"/>
<dbReference type="KEGG" id="lel:PVL30_001615"/>
<dbReference type="VEuPathDB" id="FungiDB:LELG_01643"/>
<dbReference type="eggNOG" id="KOG2976">
    <property type="taxonomic scope" value="Eukaryota"/>
</dbReference>
<dbReference type="HOGENOM" id="CLU_051894_2_0_1"/>
<dbReference type="InParanoid" id="A5DWA7"/>
<dbReference type="OMA" id="WISIATH"/>
<dbReference type="OrthoDB" id="272162at2759"/>
<dbReference type="Proteomes" id="UP000001996">
    <property type="component" value="Unassembled WGS sequence"/>
</dbReference>
<dbReference type="GO" id="GO:0034274">
    <property type="term" value="C:Atg12-Atg5-Atg16 complex"/>
    <property type="evidence" value="ECO:0007669"/>
    <property type="project" value="TreeGrafter"/>
</dbReference>
<dbReference type="GO" id="GO:0005776">
    <property type="term" value="C:autophagosome"/>
    <property type="evidence" value="ECO:0007669"/>
    <property type="project" value="TreeGrafter"/>
</dbReference>
<dbReference type="GO" id="GO:0044233">
    <property type="term" value="C:mitochondria-associated endoplasmic reticulum membrane contact site"/>
    <property type="evidence" value="ECO:0007669"/>
    <property type="project" value="TreeGrafter"/>
</dbReference>
<dbReference type="GO" id="GO:0061908">
    <property type="term" value="C:phagophore"/>
    <property type="evidence" value="ECO:0007669"/>
    <property type="project" value="TreeGrafter"/>
</dbReference>
<dbReference type="GO" id="GO:0034045">
    <property type="term" value="C:phagophore assembly site membrane"/>
    <property type="evidence" value="ECO:0007669"/>
    <property type="project" value="UniProtKB-SubCell"/>
</dbReference>
<dbReference type="GO" id="GO:0019776">
    <property type="term" value="F:Atg8-family ligase activity"/>
    <property type="evidence" value="ECO:0007669"/>
    <property type="project" value="TreeGrafter"/>
</dbReference>
<dbReference type="GO" id="GO:0000422">
    <property type="term" value="P:autophagy of mitochondrion"/>
    <property type="evidence" value="ECO:0007669"/>
    <property type="project" value="TreeGrafter"/>
</dbReference>
<dbReference type="GO" id="GO:0006995">
    <property type="term" value="P:cellular response to nitrogen starvation"/>
    <property type="evidence" value="ECO:0007669"/>
    <property type="project" value="TreeGrafter"/>
</dbReference>
<dbReference type="GO" id="GO:0034727">
    <property type="term" value="P:piecemeal microautophagy of the nucleus"/>
    <property type="evidence" value="ECO:0007669"/>
    <property type="project" value="TreeGrafter"/>
</dbReference>
<dbReference type="GO" id="GO:0015031">
    <property type="term" value="P:protein transport"/>
    <property type="evidence" value="ECO:0007669"/>
    <property type="project" value="UniProtKB-KW"/>
</dbReference>
<dbReference type="Gene3D" id="3.10.20.620">
    <property type="match status" value="1"/>
</dbReference>
<dbReference type="Gene3D" id="1.10.246.190">
    <property type="entry name" value="Autophagy protein Apg5, helix rich domain"/>
    <property type="match status" value="1"/>
</dbReference>
<dbReference type="Gene3D" id="3.10.20.90">
    <property type="entry name" value="Phosphatidylinositol 3-kinase Catalytic Subunit, Chain A, domain 1"/>
    <property type="match status" value="1"/>
</dbReference>
<dbReference type="InterPro" id="IPR007239">
    <property type="entry name" value="Atg5"/>
</dbReference>
<dbReference type="InterPro" id="IPR048940">
    <property type="entry name" value="ATG5_HBR"/>
</dbReference>
<dbReference type="InterPro" id="IPR042526">
    <property type="entry name" value="Atg5_HR"/>
</dbReference>
<dbReference type="InterPro" id="IPR048939">
    <property type="entry name" value="ATG5_UblA"/>
</dbReference>
<dbReference type="InterPro" id="IPR042527">
    <property type="entry name" value="Atg5_UblA_dom_sf"/>
</dbReference>
<dbReference type="InterPro" id="IPR048318">
    <property type="entry name" value="ATG5_UblB"/>
</dbReference>
<dbReference type="PANTHER" id="PTHR13040">
    <property type="entry name" value="AUTOPHAGY PROTEIN 5"/>
    <property type="match status" value="1"/>
</dbReference>
<dbReference type="PANTHER" id="PTHR13040:SF2">
    <property type="entry name" value="AUTOPHAGY PROTEIN 5"/>
    <property type="match status" value="1"/>
</dbReference>
<dbReference type="Pfam" id="PF20637">
    <property type="entry name" value="ATG5_HBR"/>
    <property type="match status" value="1"/>
</dbReference>
<dbReference type="Pfam" id="PF20638">
    <property type="entry name" value="ATG5_UblA"/>
    <property type="match status" value="1"/>
</dbReference>
<dbReference type="Pfam" id="PF04106">
    <property type="entry name" value="ATG5_UblB"/>
    <property type="match status" value="1"/>
</dbReference>
<protein>
    <recommendedName>
        <fullName>Autophagy protein 5</fullName>
    </recommendedName>
</protein>
<sequence>MSKLTSIEENIEIKRRLWNGSISLKIIISIVGESSEDGITNEYEYLTEGYRNAYLPTLYPNIVSYIKKLPTVAFSNNSPIWLEYEGVPLRWNLPIGVLYDHLYLPAKFTNQSTPWTLDLKIASSTLPYPSNYIVPFTYSAEDGSVNYTKSINEMLLNQLKQSCYVLNGTAKPIMQLNGPETELLCNLVITRNLKTYNFFNNKIIKQIRGIPVRIYLPNTQLVAQAAVDPHILLQDLLLERIPTLMEVSVPIIHGIDAGPLLKFQLNDIWHQFKHPDNVLYISILMP</sequence>
<name>ATG5_LODEL</name>
<proteinExistence type="inferred from homology"/>
<accession>A5DWA7</accession>
<keyword id="KW-0072">Autophagy</keyword>
<keyword id="KW-1017">Isopeptide bond</keyword>
<keyword id="KW-0472">Membrane</keyword>
<keyword id="KW-0653">Protein transport</keyword>
<keyword id="KW-1185">Reference proteome</keyword>
<keyword id="KW-0813">Transport</keyword>
<keyword id="KW-0832">Ubl conjugation</keyword>
<comment type="function">
    <text evidence="1">Involved in cytoplasm to vacuole transport (Cvt) and autophagic vesicle formation. Autophagy is essential for maintenance of amino acid levels and protein synthesis under nitrogen starvation. Required for selective autophagic degradation of the nucleus (nucleophagy). Also required for mitophagy, which eliminates defective or superfluous mitochondria in order to fulfill cellular energy requirements and prevent excess ROS production. Conjugation with ATG12, through a ubiquitin-like conjugating system involving ATG7 as an E1-like activating enzyme and ATG10 as an E2-like conjugating enzyme, is essential for its function. The ATG12-ATG5 conjugate acts as an E3-like enzyme which is required for lipidation of ATG8 and ATG8 association to the vesicle membranes (By similarity).</text>
</comment>
<comment type="subunit">
    <text evidence="1">Conjugated with ATG12.</text>
</comment>
<comment type="subcellular location">
    <subcellularLocation>
        <location evidence="1">Preautophagosomal structure membrane</location>
        <topology evidence="1">Peripheral membrane protein</topology>
    </subcellularLocation>
</comment>
<comment type="PTM">
    <text evidence="1">Conjugated to ATG12; which is essential for autophagy.</text>
</comment>
<comment type="similarity">
    <text evidence="2">Belongs to the ATG5 family.</text>
</comment>